<keyword id="KW-0007">Acetylation</keyword>
<keyword id="KW-0175">Coiled coil</keyword>
<keyword id="KW-0903">Direct protein sequencing</keyword>
<keyword id="KW-0472">Membrane</keyword>
<keyword id="KW-0496">Mitochondrion</keyword>
<keyword id="KW-0999">Mitochondrion inner membrane</keyword>
<keyword id="KW-1274">Primary mitochondrial disease</keyword>
<keyword id="KW-1267">Proteomics identification</keyword>
<keyword id="KW-1185">Reference proteome</keyword>
<keyword id="KW-0812">Transmembrane</keyword>
<keyword id="KW-1133">Transmembrane helix</keyword>
<proteinExistence type="evidence at protein level"/>
<reference key="1">
    <citation type="journal article" date="2000" name="Genome Res.">
        <title>Cloning and functional analysis of cDNAs with open reading frames for 300 previously undefined genes expressed in CD34+ hematopoietic stem/progenitor cells.</title>
        <authorList>
            <person name="Zhang Q.-H."/>
            <person name="Ye M."/>
            <person name="Wu X.-Y."/>
            <person name="Ren S.-X."/>
            <person name="Zhao M."/>
            <person name="Zhao C.-J."/>
            <person name="Fu G."/>
            <person name="Shen Y."/>
            <person name="Fan H.-Y."/>
            <person name="Lu G."/>
            <person name="Zhong M."/>
            <person name="Xu X.-R."/>
            <person name="Han Z.-G."/>
            <person name="Zhang J.-W."/>
            <person name="Tao J."/>
            <person name="Huang Q.-H."/>
            <person name="Zhou J."/>
            <person name="Hu G.-X."/>
            <person name="Gu J."/>
            <person name="Chen S.-J."/>
            <person name="Chen Z."/>
        </authorList>
    </citation>
    <scope>NUCLEOTIDE SEQUENCE [LARGE SCALE MRNA]</scope>
    <source>
        <tissue>Umbilical cord blood</tissue>
    </source>
</reference>
<reference key="2">
    <citation type="journal article" date="2004" name="Nat. Genet.">
        <title>Complete sequencing and characterization of 21,243 full-length human cDNAs.</title>
        <authorList>
            <person name="Ota T."/>
            <person name="Suzuki Y."/>
            <person name="Nishikawa T."/>
            <person name="Otsuki T."/>
            <person name="Sugiyama T."/>
            <person name="Irie R."/>
            <person name="Wakamatsu A."/>
            <person name="Hayashi K."/>
            <person name="Sato H."/>
            <person name="Nagai K."/>
            <person name="Kimura K."/>
            <person name="Makita H."/>
            <person name="Sekine M."/>
            <person name="Obayashi M."/>
            <person name="Nishi T."/>
            <person name="Shibahara T."/>
            <person name="Tanaka T."/>
            <person name="Ishii S."/>
            <person name="Yamamoto J."/>
            <person name="Saito K."/>
            <person name="Kawai Y."/>
            <person name="Isono Y."/>
            <person name="Nakamura Y."/>
            <person name="Nagahari K."/>
            <person name="Murakami K."/>
            <person name="Yasuda T."/>
            <person name="Iwayanagi T."/>
            <person name="Wagatsuma M."/>
            <person name="Shiratori A."/>
            <person name="Sudo H."/>
            <person name="Hosoiri T."/>
            <person name="Kaku Y."/>
            <person name="Kodaira H."/>
            <person name="Kondo H."/>
            <person name="Sugawara M."/>
            <person name="Takahashi M."/>
            <person name="Kanda K."/>
            <person name="Yokoi T."/>
            <person name="Furuya T."/>
            <person name="Kikkawa E."/>
            <person name="Omura Y."/>
            <person name="Abe K."/>
            <person name="Kamihara K."/>
            <person name="Katsuta N."/>
            <person name="Sato K."/>
            <person name="Tanikawa M."/>
            <person name="Yamazaki M."/>
            <person name="Ninomiya K."/>
            <person name="Ishibashi T."/>
            <person name="Yamashita H."/>
            <person name="Murakawa K."/>
            <person name="Fujimori K."/>
            <person name="Tanai H."/>
            <person name="Kimata M."/>
            <person name="Watanabe M."/>
            <person name="Hiraoka S."/>
            <person name="Chiba Y."/>
            <person name="Ishida S."/>
            <person name="Ono Y."/>
            <person name="Takiguchi S."/>
            <person name="Watanabe S."/>
            <person name="Yosida M."/>
            <person name="Hotuta T."/>
            <person name="Kusano J."/>
            <person name="Kanehori K."/>
            <person name="Takahashi-Fujii A."/>
            <person name="Hara H."/>
            <person name="Tanase T.-O."/>
            <person name="Nomura Y."/>
            <person name="Togiya S."/>
            <person name="Komai F."/>
            <person name="Hara R."/>
            <person name="Takeuchi K."/>
            <person name="Arita M."/>
            <person name="Imose N."/>
            <person name="Musashino K."/>
            <person name="Yuuki H."/>
            <person name="Oshima A."/>
            <person name="Sasaki N."/>
            <person name="Aotsuka S."/>
            <person name="Yoshikawa Y."/>
            <person name="Matsunawa H."/>
            <person name="Ichihara T."/>
            <person name="Shiohata N."/>
            <person name="Sano S."/>
            <person name="Moriya S."/>
            <person name="Momiyama H."/>
            <person name="Satoh N."/>
            <person name="Takami S."/>
            <person name="Terashima Y."/>
            <person name="Suzuki O."/>
            <person name="Nakagawa S."/>
            <person name="Senoh A."/>
            <person name="Mizoguchi H."/>
            <person name="Goto Y."/>
            <person name="Shimizu F."/>
            <person name="Wakebe H."/>
            <person name="Hishigaki H."/>
            <person name="Watanabe T."/>
            <person name="Sugiyama A."/>
            <person name="Takemoto M."/>
            <person name="Kawakami B."/>
            <person name="Yamazaki M."/>
            <person name="Watanabe K."/>
            <person name="Kumagai A."/>
            <person name="Itakura S."/>
            <person name="Fukuzumi Y."/>
            <person name="Fujimori Y."/>
            <person name="Komiyama M."/>
            <person name="Tashiro H."/>
            <person name="Tanigami A."/>
            <person name="Fujiwara T."/>
            <person name="Ono T."/>
            <person name="Yamada K."/>
            <person name="Fujii Y."/>
            <person name="Ozaki K."/>
            <person name="Hirao M."/>
            <person name="Ohmori Y."/>
            <person name="Kawabata A."/>
            <person name="Hikiji T."/>
            <person name="Kobatake N."/>
            <person name="Inagaki H."/>
            <person name="Ikema Y."/>
            <person name="Okamoto S."/>
            <person name="Okitani R."/>
            <person name="Kawakami T."/>
            <person name="Noguchi S."/>
            <person name="Itoh T."/>
            <person name="Shigeta K."/>
            <person name="Senba T."/>
            <person name="Matsumura K."/>
            <person name="Nakajima Y."/>
            <person name="Mizuno T."/>
            <person name="Morinaga M."/>
            <person name="Sasaki M."/>
            <person name="Togashi T."/>
            <person name="Oyama M."/>
            <person name="Hata H."/>
            <person name="Watanabe M."/>
            <person name="Komatsu T."/>
            <person name="Mizushima-Sugano J."/>
            <person name="Satoh T."/>
            <person name="Shirai Y."/>
            <person name="Takahashi Y."/>
            <person name="Nakagawa K."/>
            <person name="Okumura K."/>
            <person name="Nagase T."/>
            <person name="Nomura N."/>
            <person name="Kikuchi H."/>
            <person name="Masuho Y."/>
            <person name="Yamashita R."/>
            <person name="Nakai K."/>
            <person name="Yada T."/>
            <person name="Nakamura Y."/>
            <person name="Ohara O."/>
            <person name="Isogai T."/>
            <person name="Sugano S."/>
        </authorList>
    </citation>
    <scope>NUCLEOTIDE SEQUENCE [LARGE SCALE MRNA]</scope>
    <source>
        <tissue>Mammary gland</tissue>
    </source>
</reference>
<reference key="3">
    <citation type="submission" date="2005-07" db="EMBL/GenBank/DDBJ databases">
        <authorList>
            <person name="Mural R.J."/>
            <person name="Istrail S."/>
            <person name="Sutton G.G."/>
            <person name="Florea L."/>
            <person name="Halpern A.L."/>
            <person name="Mobarry C.M."/>
            <person name="Lippert R."/>
            <person name="Walenz B."/>
            <person name="Shatkay H."/>
            <person name="Dew I."/>
            <person name="Miller J.R."/>
            <person name="Flanigan M.J."/>
            <person name="Edwards N.J."/>
            <person name="Bolanos R."/>
            <person name="Fasulo D."/>
            <person name="Halldorsson B.V."/>
            <person name="Hannenhalli S."/>
            <person name="Turner R."/>
            <person name="Yooseph S."/>
            <person name="Lu F."/>
            <person name="Nusskern D.R."/>
            <person name="Shue B.C."/>
            <person name="Zheng X.H."/>
            <person name="Zhong F."/>
            <person name="Delcher A.L."/>
            <person name="Huson D.H."/>
            <person name="Kravitz S.A."/>
            <person name="Mouchard L."/>
            <person name="Reinert K."/>
            <person name="Remington K.A."/>
            <person name="Clark A.G."/>
            <person name="Waterman M.S."/>
            <person name="Eichler E.E."/>
            <person name="Adams M.D."/>
            <person name="Hunkapiller M.W."/>
            <person name="Myers E.W."/>
            <person name="Venter J.C."/>
        </authorList>
    </citation>
    <scope>NUCLEOTIDE SEQUENCE [LARGE SCALE GENOMIC DNA]</scope>
</reference>
<reference key="4">
    <citation type="journal article" date="2004" name="Genome Res.">
        <title>The status, quality, and expansion of the NIH full-length cDNA project: the Mammalian Gene Collection (MGC).</title>
        <authorList>
            <consortium name="The MGC Project Team"/>
        </authorList>
    </citation>
    <scope>NUCLEOTIDE SEQUENCE [LARGE SCALE MRNA]</scope>
    <source>
        <tissue>Uterus</tissue>
    </source>
</reference>
<reference key="5">
    <citation type="journal article" date="2006" name="Nature">
        <title>DNA sequence of human chromosome 17 and analysis of rearrangement in the human lineage.</title>
        <authorList>
            <person name="Zody M.C."/>
            <person name="Garber M."/>
            <person name="Adams D.J."/>
            <person name="Sharpe T."/>
            <person name="Harrow J."/>
            <person name="Lupski J.R."/>
            <person name="Nicholson C."/>
            <person name="Searle S.M."/>
            <person name="Wilming L."/>
            <person name="Young S.K."/>
            <person name="Abouelleil A."/>
            <person name="Allen N.R."/>
            <person name="Bi W."/>
            <person name="Bloom T."/>
            <person name="Borowsky M.L."/>
            <person name="Bugalter B.E."/>
            <person name="Butler J."/>
            <person name="Chang J.L."/>
            <person name="Chen C.-K."/>
            <person name="Cook A."/>
            <person name="Corum B."/>
            <person name="Cuomo C.A."/>
            <person name="de Jong P.J."/>
            <person name="DeCaprio D."/>
            <person name="Dewar K."/>
            <person name="FitzGerald M."/>
            <person name="Gilbert J."/>
            <person name="Gibson R."/>
            <person name="Gnerre S."/>
            <person name="Goldstein S."/>
            <person name="Grafham D.V."/>
            <person name="Grocock R."/>
            <person name="Hafez N."/>
            <person name="Hagopian D.S."/>
            <person name="Hart E."/>
            <person name="Norman C.H."/>
            <person name="Humphray S."/>
            <person name="Jaffe D.B."/>
            <person name="Jones M."/>
            <person name="Kamal M."/>
            <person name="Khodiyar V.K."/>
            <person name="LaButti K."/>
            <person name="Laird G."/>
            <person name="Lehoczky J."/>
            <person name="Liu X."/>
            <person name="Lokyitsang T."/>
            <person name="Loveland J."/>
            <person name="Lui A."/>
            <person name="Macdonald P."/>
            <person name="Major J.E."/>
            <person name="Matthews L."/>
            <person name="Mauceli E."/>
            <person name="McCarroll S.A."/>
            <person name="Mihalev A.H."/>
            <person name="Mudge J."/>
            <person name="Nguyen C."/>
            <person name="Nicol R."/>
            <person name="O'Leary S.B."/>
            <person name="Osoegawa K."/>
            <person name="Schwartz D.C."/>
            <person name="Shaw-Smith C."/>
            <person name="Stankiewicz P."/>
            <person name="Steward C."/>
            <person name="Swarbreck D."/>
            <person name="Venkataraman V."/>
            <person name="Whittaker C.A."/>
            <person name="Yang X."/>
            <person name="Zimmer A.R."/>
            <person name="Bradley A."/>
            <person name="Hubbard T."/>
            <person name="Birren B.W."/>
            <person name="Rogers J."/>
            <person name="Lander E.S."/>
            <person name="Nusbaum C."/>
        </authorList>
    </citation>
    <scope>NUCLEOTIDE SEQUENCE [LARGE SCALE GENOMIC DNA]</scope>
</reference>
<reference key="6">
    <citation type="submission" date="2005-06" db="UniProtKB">
        <authorList>
            <person name="Bienvenut W.V."/>
        </authorList>
    </citation>
    <scope>PROTEIN SEQUENCE OF 40-48 AND 84-93</scope>
    <scope>IDENTIFICATION BY MASS SPECTROMETRY</scope>
    <source>
        <tissue>B-cell lymphoma</tissue>
    </source>
</reference>
<reference key="7">
    <citation type="journal article" date="2009" name="Anal. Chem.">
        <title>Lys-N and trypsin cover complementary parts of the phosphoproteome in a refined SCX-based approach.</title>
        <authorList>
            <person name="Gauci S."/>
            <person name="Helbig A.O."/>
            <person name="Slijper M."/>
            <person name="Krijgsveld J."/>
            <person name="Heck A.J."/>
            <person name="Mohammed S."/>
        </authorList>
    </citation>
    <scope>ACETYLATION [LARGE SCALE ANALYSIS] AT ALA-2</scope>
    <scope>CLEAVAGE OF INITIATOR METHIONINE [LARGE SCALE ANALYSIS]</scope>
    <scope>IDENTIFICATION BY MASS SPECTROMETRY [LARGE SCALE ANALYSIS]</scope>
</reference>
<reference key="8">
    <citation type="journal article" date="2011" name="BMC Syst. Biol.">
        <title>Initial characterization of the human central proteome.</title>
        <authorList>
            <person name="Burkard T.R."/>
            <person name="Planyavsky M."/>
            <person name="Kaupe I."/>
            <person name="Breitwieser F.P."/>
            <person name="Buerckstuemmer T."/>
            <person name="Bennett K.L."/>
            <person name="Superti-Furga G."/>
            <person name="Colinge J."/>
        </authorList>
    </citation>
    <scope>IDENTIFICATION BY MASS SPECTROMETRY [LARGE SCALE ANALYSIS]</scope>
</reference>
<reference key="9">
    <citation type="journal article" date="2012" name="Cell">
        <title>MITRAC links mitochondrial protein translocation to respiratory-chain assembly and translational regulation.</title>
        <authorList>
            <person name="Mick D.U."/>
            <person name="Dennerlein S."/>
            <person name="Wiese H."/>
            <person name="Reinhold R."/>
            <person name="Pacheu-Grau D."/>
            <person name="Lorenzi I."/>
            <person name="Sasarman F."/>
            <person name="Weraarpachai W."/>
            <person name="Shoubridge E.A."/>
            <person name="Warscheid B."/>
            <person name="Rehling P."/>
        </authorList>
    </citation>
    <scope>FUNCTION</scope>
    <scope>SUBCELLULAR LOCATION</scope>
    <scope>IDENTIFICATION IN MITRAC COMPLEX</scope>
    <scope>TOPOLOGY</scope>
</reference>
<reference key="10">
    <citation type="journal article" date="2012" name="Proc. Natl. Acad. Sci. U.S.A.">
        <title>N-terminal acetylome analyses and functional insights of the N-terminal acetyltransferase NatB.</title>
        <authorList>
            <person name="Van Damme P."/>
            <person name="Lasa M."/>
            <person name="Polevoda B."/>
            <person name="Gazquez C."/>
            <person name="Elosegui-Artola A."/>
            <person name="Kim D.S."/>
            <person name="De Juan-Pardo E."/>
            <person name="Demeyer K."/>
            <person name="Hole K."/>
            <person name="Larrea E."/>
            <person name="Timmerman E."/>
            <person name="Prieto J."/>
            <person name="Arnesen T."/>
            <person name="Sherman F."/>
            <person name="Gevaert K."/>
            <person name="Aldabe R."/>
        </authorList>
    </citation>
    <scope>ACETYLATION [LARGE SCALE ANALYSIS] AT ALA-2</scope>
    <scope>CLEAVAGE OF INITIATOR METHIONINE [LARGE SCALE ANALYSIS]</scope>
    <scope>IDENTIFICATION BY MASS SPECTROMETRY [LARGE SCALE ANALYSIS]</scope>
</reference>
<reference key="11">
    <citation type="journal article" date="2015" name="Cell Rep.">
        <title>MITRAC7 acts as a COX1-specific chaperone and reveals a checkpoint during cytochrome c oxidase assembly.</title>
        <authorList>
            <person name="Dennerlein S."/>
            <person name="Oeljeklaus S."/>
            <person name="Jans D."/>
            <person name="Hellwig C."/>
            <person name="Bareth B."/>
            <person name="Jakobs S."/>
            <person name="Deckers M."/>
            <person name="Warscheid B."/>
            <person name="Rehling P."/>
        </authorList>
    </citation>
    <scope>INTERACTION WITH MT-CO1; SMIM20; SURF1 AND TIMM21</scope>
</reference>
<reference key="12">
    <citation type="journal article" date="2015" name="Proteomics">
        <title>N-terminome analysis of the human mitochondrial proteome.</title>
        <authorList>
            <person name="Vaca Jacome A.S."/>
            <person name="Rabilloud T."/>
            <person name="Schaeffer-Reiss C."/>
            <person name="Rompais M."/>
            <person name="Ayoub D."/>
            <person name="Lane L."/>
            <person name="Bairoch A."/>
            <person name="Van Dorsselaer A."/>
            <person name="Carapito C."/>
        </authorList>
    </citation>
    <scope>IDENTIFICATION BY MASS SPECTROMETRY [LARGE SCALE ANALYSIS]</scope>
</reference>
<reference key="13">
    <citation type="journal article" date="2015" name="J. Med. Genet.">
        <title>Mutations in COA3 cause isolated complex IV deficiency associated with neuropathy, exercise intolerance, obesity, and short stature.</title>
        <authorList>
            <person name="Ostergaard E."/>
            <person name="Weraarpachai W."/>
            <person name="Ravn K."/>
            <person name="Born A.P."/>
            <person name="Joenson L."/>
            <person name="Duno M."/>
            <person name="Wibrand F."/>
            <person name="Shoubridge E.A."/>
            <person name="Vissing J."/>
        </authorList>
    </citation>
    <scope>INVOLVEMENT IN MC4DN14</scope>
    <scope>VARIANT MC4DN14 CYS-72</scope>
</reference>
<protein>
    <recommendedName>
        <fullName>Cytochrome c oxidase assembly factor 3 homolog, mitochondrial</fullName>
    </recommendedName>
    <alternativeName>
        <fullName>Coiled-coil domain-containing protein 56</fullName>
    </alternativeName>
    <alternativeName>
        <fullName>Mitochondrial translation regulation assembly intermediate of cytochrome c oxidase protein of 12 kDa</fullName>
    </alternativeName>
</protein>
<accession>Q9Y2R0</accession>
<accession>A8K498</accession>
<gene>
    <name type="primary">COA3</name>
    <name type="synonym">CCDC56</name>
    <name type="synonym">MITRAC12</name>
    <name type="ORF">HSPC009</name>
</gene>
<organism>
    <name type="scientific">Homo sapiens</name>
    <name type="common">Human</name>
    <dbReference type="NCBI Taxonomy" id="9606"/>
    <lineage>
        <taxon>Eukaryota</taxon>
        <taxon>Metazoa</taxon>
        <taxon>Chordata</taxon>
        <taxon>Craniata</taxon>
        <taxon>Vertebrata</taxon>
        <taxon>Euteleostomi</taxon>
        <taxon>Mammalia</taxon>
        <taxon>Eutheria</taxon>
        <taxon>Euarchontoglires</taxon>
        <taxon>Primates</taxon>
        <taxon>Haplorrhini</taxon>
        <taxon>Catarrhini</taxon>
        <taxon>Hominidae</taxon>
        <taxon>Homo</taxon>
    </lineage>
</organism>
<feature type="initiator methionine" description="Removed" evidence="8 9">
    <location>
        <position position="1"/>
    </location>
</feature>
<feature type="chain" id="PRO_0000239438" description="Cytochrome c oxidase assembly factor 3 homolog, mitochondrial">
    <location>
        <begin position="2"/>
        <end position="106"/>
    </location>
</feature>
<feature type="topological domain" description="Mitochondrial matrix" evidence="1">
    <location>
        <begin position="2"/>
        <end position="57"/>
    </location>
</feature>
<feature type="transmembrane region" description="Helical" evidence="1">
    <location>
        <begin position="58"/>
        <end position="78"/>
    </location>
</feature>
<feature type="topological domain" description="Mitochondrial intermembrane" evidence="1">
    <location>
        <begin position="79"/>
        <end position="106"/>
    </location>
</feature>
<feature type="region of interest" description="Disordered" evidence="2">
    <location>
        <begin position="1"/>
        <end position="34"/>
    </location>
</feature>
<feature type="coiled-coil region" evidence="1">
    <location>
        <begin position="78"/>
        <end position="104"/>
    </location>
</feature>
<feature type="modified residue" description="N-acetylalanine" evidence="8 9">
    <location>
        <position position="2"/>
    </location>
</feature>
<feature type="sequence variant" id="VAR_084180" description="In MC4DN14; uncertain significance; dbSNP:rs139877390." evidence="4">
    <original>Y</original>
    <variation>C</variation>
    <location>
        <position position="72"/>
    </location>
</feature>
<dbReference type="EMBL" id="AF070665">
    <property type="protein sequence ID" value="AAD20971.1"/>
    <property type="molecule type" value="mRNA"/>
</dbReference>
<dbReference type="EMBL" id="AK290863">
    <property type="protein sequence ID" value="BAF83552.1"/>
    <property type="molecule type" value="mRNA"/>
</dbReference>
<dbReference type="EMBL" id="AC016889">
    <property type="status" value="NOT_ANNOTATED_CDS"/>
    <property type="molecule type" value="Genomic_DNA"/>
</dbReference>
<dbReference type="EMBL" id="CH471152">
    <property type="protein sequence ID" value="EAW60884.1"/>
    <property type="molecule type" value="Genomic_DNA"/>
</dbReference>
<dbReference type="EMBL" id="BC002698">
    <property type="protein sequence ID" value="AAH02698.1"/>
    <property type="molecule type" value="mRNA"/>
</dbReference>
<dbReference type="CCDS" id="CCDS32660.1"/>
<dbReference type="RefSeq" id="NP_001035521.1">
    <property type="nucleotide sequence ID" value="NM_001040431.3"/>
</dbReference>
<dbReference type="BioGRID" id="118785">
    <property type="interactions" value="110"/>
</dbReference>
<dbReference type="CORUM" id="Q9Y2R0"/>
<dbReference type="FunCoup" id="Q9Y2R0">
    <property type="interactions" value="538"/>
</dbReference>
<dbReference type="IntAct" id="Q9Y2R0">
    <property type="interactions" value="51"/>
</dbReference>
<dbReference type="MINT" id="Q9Y2R0"/>
<dbReference type="STRING" id="9606.ENSP00000354762"/>
<dbReference type="iPTMnet" id="Q9Y2R0"/>
<dbReference type="MetOSite" id="Q9Y2R0"/>
<dbReference type="PhosphoSitePlus" id="Q9Y2R0"/>
<dbReference type="BioMuta" id="COA3"/>
<dbReference type="DMDM" id="74735238"/>
<dbReference type="jPOST" id="Q9Y2R0"/>
<dbReference type="MassIVE" id="Q9Y2R0"/>
<dbReference type="PaxDb" id="9606-ENSP00000354762"/>
<dbReference type="PeptideAtlas" id="Q9Y2R0"/>
<dbReference type="ProteomicsDB" id="85873"/>
<dbReference type="Pumba" id="Q9Y2R0"/>
<dbReference type="TopDownProteomics" id="Q9Y2R0"/>
<dbReference type="Antibodypedia" id="29425">
    <property type="antibodies" value="66 antibodies from 17 providers"/>
</dbReference>
<dbReference type="DNASU" id="28958"/>
<dbReference type="Ensembl" id="ENST00000328434.8">
    <property type="protein sequence ID" value="ENSP00000354762.5"/>
    <property type="gene ID" value="ENSG00000183978.8"/>
</dbReference>
<dbReference type="GeneID" id="28958"/>
<dbReference type="KEGG" id="hsa:28958"/>
<dbReference type="MANE-Select" id="ENST00000328434.8">
    <property type="protein sequence ID" value="ENSP00000354762.5"/>
    <property type="RefSeq nucleotide sequence ID" value="NM_001040431.3"/>
    <property type="RefSeq protein sequence ID" value="NP_001035521.1"/>
</dbReference>
<dbReference type="UCSC" id="uc002ibl.5">
    <property type="organism name" value="human"/>
</dbReference>
<dbReference type="AGR" id="HGNC:24990"/>
<dbReference type="CTD" id="28958"/>
<dbReference type="DisGeNET" id="28958"/>
<dbReference type="GeneCards" id="COA3"/>
<dbReference type="HGNC" id="HGNC:24990">
    <property type="gene designation" value="COA3"/>
</dbReference>
<dbReference type="HPA" id="ENSG00000183978">
    <property type="expression patterns" value="Low tissue specificity"/>
</dbReference>
<dbReference type="MalaCards" id="COA3"/>
<dbReference type="MIM" id="614775">
    <property type="type" value="gene"/>
</dbReference>
<dbReference type="MIM" id="619058">
    <property type="type" value="phenotype"/>
</dbReference>
<dbReference type="neXtProt" id="NX_Q9Y2R0"/>
<dbReference type="OpenTargets" id="ENSG00000183978"/>
<dbReference type="Orphanet" id="254905">
    <property type="disease" value="Isolated cytochrome C oxidase deficiency"/>
</dbReference>
<dbReference type="PharmGKB" id="PA142672172"/>
<dbReference type="VEuPathDB" id="HostDB:ENSG00000183978"/>
<dbReference type="eggNOG" id="KOG4782">
    <property type="taxonomic scope" value="Eukaryota"/>
</dbReference>
<dbReference type="GeneTree" id="ENSGT00390000016262"/>
<dbReference type="HOGENOM" id="CLU_167761_0_1_1"/>
<dbReference type="InParanoid" id="Q9Y2R0"/>
<dbReference type="OMA" id="MHFIRQV"/>
<dbReference type="OrthoDB" id="10018333at2759"/>
<dbReference type="PAN-GO" id="Q9Y2R0">
    <property type="GO annotations" value="2 GO annotations based on evolutionary models"/>
</dbReference>
<dbReference type="PhylomeDB" id="Q9Y2R0"/>
<dbReference type="TreeFam" id="TF314703"/>
<dbReference type="PathwayCommons" id="Q9Y2R0"/>
<dbReference type="Reactome" id="R-HSA-9864848">
    <property type="pathway name" value="Complex IV assembly"/>
</dbReference>
<dbReference type="SignaLink" id="Q9Y2R0"/>
<dbReference type="SIGNOR" id="Q9Y2R0"/>
<dbReference type="BioGRID-ORCS" id="28958">
    <property type="hits" value="166 hits in 1164 CRISPR screens"/>
</dbReference>
<dbReference type="ChiTaRS" id="COA3">
    <property type="organism name" value="human"/>
</dbReference>
<dbReference type="GenomeRNAi" id="28958"/>
<dbReference type="Pharos" id="Q9Y2R0">
    <property type="development level" value="Tbio"/>
</dbReference>
<dbReference type="PRO" id="PR:Q9Y2R0"/>
<dbReference type="Proteomes" id="UP000005640">
    <property type="component" value="Chromosome 17"/>
</dbReference>
<dbReference type="RNAct" id="Q9Y2R0">
    <property type="molecule type" value="protein"/>
</dbReference>
<dbReference type="Bgee" id="ENSG00000183978">
    <property type="expression patterns" value="Expressed in mucosa of transverse colon and 199 other cell types or tissues"/>
</dbReference>
<dbReference type="ExpressionAtlas" id="Q9Y2R0">
    <property type="expression patterns" value="baseline and differential"/>
</dbReference>
<dbReference type="GO" id="GO:0005743">
    <property type="term" value="C:mitochondrial inner membrane"/>
    <property type="evidence" value="ECO:0000314"/>
    <property type="project" value="UniProtKB"/>
</dbReference>
<dbReference type="GO" id="GO:0005739">
    <property type="term" value="C:mitochondrion"/>
    <property type="evidence" value="ECO:0000314"/>
    <property type="project" value="HPA"/>
</dbReference>
<dbReference type="GO" id="GO:0033617">
    <property type="term" value="P:mitochondrial cytochrome c oxidase assembly"/>
    <property type="evidence" value="ECO:0000315"/>
    <property type="project" value="UniProtKB"/>
</dbReference>
<dbReference type="GO" id="GO:0070131">
    <property type="term" value="P:positive regulation of mitochondrial translation"/>
    <property type="evidence" value="ECO:0000315"/>
    <property type="project" value="UniProtKB"/>
</dbReference>
<dbReference type="InterPro" id="IPR041752">
    <property type="entry name" value="Coa3"/>
</dbReference>
<dbReference type="InterPro" id="IPR018628">
    <property type="entry name" value="Coa3_cc"/>
</dbReference>
<dbReference type="PANTHER" id="PTHR15642:SF3">
    <property type="entry name" value="CYTOCHROME C OXIDASE ASSEMBLY FACTOR 3 HOMOLOG, MITOCHONDRIAL"/>
    <property type="match status" value="1"/>
</dbReference>
<dbReference type="PANTHER" id="PTHR15642">
    <property type="entry name" value="CYTOCHROME C OXIDASE ASSEMBLY FACTOR 3, MITOCHONDRIAL"/>
    <property type="match status" value="1"/>
</dbReference>
<dbReference type="Pfam" id="PF09813">
    <property type="entry name" value="Coa3_cc"/>
    <property type="match status" value="1"/>
</dbReference>
<comment type="function">
    <text evidence="3">Core component of the MITRAC (mitochondrial translation regulation assembly intermediate of cytochrome c oxidase complex) complex, that regulates cytochrome c oxidase assembly. MITRAC complexes regulate both translation of mitochondrial encoded components and assembly of nuclear-encoded components imported in mitochondrion. Required for efficient translation of MT-CO1 and mitochondrial respiratory chain complex IV assembly.</text>
</comment>
<comment type="subunit">
    <text evidence="3 5 7">Along with COX14, core component of the MITRAC (mitochondrial translation regulation assembly intermediate of cytochrome c oxidase complex) complex (Probable) (PubMed:23260140). Interacts with MT-CO1/COX1, SMIM20, SURF1 and TIMM21 (PubMed:26321642).</text>
</comment>
<comment type="interaction">
    <interactant intactId="EBI-6570446">
        <id>Q9Y2R0</id>
    </interactant>
    <interactant intactId="EBI-2117234">
        <id>P00395</id>
        <label>MT-CO1</label>
    </interactant>
    <organismsDiffer>false</organismsDiffer>
    <experiments>11</experiments>
</comment>
<comment type="interaction">
    <interactant intactId="EBI-6570446">
        <id>Q9Y2R0</id>
    </interactant>
    <interactant intactId="EBI-3915286">
        <id>Q15526</id>
        <label>SURF1</label>
    </interactant>
    <organismsDiffer>false</organismsDiffer>
    <experiments>6</experiments>
</comment>
<comment type="subcellular location">
    <subcellularLocation>
        <location evidence="3">Mitochondrion inner membrane</location>
        <topology evidence="3">Single-pass membrane protein</topology>
    </subcellularLocation>
</comment>
<comment type="disease" evidence="4">
    <disease id="DI-05935">
        <name>Mitochondrial complex IV deficiency, nuclear type 14</name>
        <acronym>MC4DN14</acronym>
        <description>An autosomal recessive mitochondrial disorder with onset in early childhood. MC4DN14 is characterized by developmental delay, cognitive impairment, motor delay, abnormal gait, sensorimotor demyelinating polyneuropathy, exercise intolerance, obesity, and short stature. Serum lactate levels are marginally increased. Patient tissues show decreased levels and activity of mitochondrial respiratory complex IV.</description>
        <dbReference type="MIM" id="619058"/>
    </disease>
    <text>The disease may be caused by variants affecting the gene represented in this entry.</text>
</comment>
<comment type="similarity">
    <text evidence="6">Belongs to the COA3 family.</text>
</comment>
<evidence type="ECO:0000255" key="1"/>
<evidence type="ECO:0000256" key="2">
    <source>
        <dbReference type="SAM" id="MobiDB-lite"/>
    </source>
</evidence>
<evidence type="ECO:0000269" key="3">
    <source>
    </source>
</evidence>
<evidence type="ECO:0000269" key="4">
    <source>
    </source>
</evidence>
<evidence type="ECO:0000269" key="5">
    <source>
    </source>
</evidence>
<evidence type="ECO:0000305" key="6"/>
<evidence type="ECO:0000305" key="7">
    <source>
    </source>
</evidence>
<evidence type="ECO:0007744" key="8">
    <source>
    </source>
</evidence>
<evidence type="ECO:0007744" key="9">
    <source>
    </source>
</evidence>
<sequence length="106" mass="11731">MASSGAGDPLDSKRGEAPFAQRIDPTREKLTPEQLHSMRQAELAQWQKVLPRRRTRNIVTGLGIGALVLAIYGYTFYSISQERFLDELEDEAKAARARALARASGS</sequence>
<name>COA3_HUMAN</name>